<name>EMC1_CHICK</name>
<proteinExistence type="evidence at transcript level"/>
<dbReference type="EMBL" id="AJ719934">
    <property type="protein sequence ID" value="CAG31593.1"/>
    <property type="molecule type" value="mRNA"/>
</dbReference>
<dbReference type="RefSeq" id="NP_001012856.1">
    <property type="nucleotide sequence ID" value="NM_001012838.1"/>
</dbReference>
<dbReference type="SMR" id="Q5ZL00"/>
<dbReference type="FunCoup" id="Q5ZL00">
    <property type="interactions" value="2633"/>
</dbReference>
<dbReference type="STRING" id="9031.ENSGALP00000055889"/>
<dbReference type="GlyCosmos" id="Q5ZL00">
    <property type="glycosylation" value="4 sites, No reported glycans"/>
</dbReference>
<dbReference type="GlyGen" id="Q5ZL00">
    <property type="glycosylation" value="4 sites"/>
</dbReference>
<dbReference type="PaxDb" id="9031-ENSGALP00000006311"/>
<dbReference type="GeneID" id="419470"/>
<dbReference type="KEGG" id="gga:419470"/>
<dbReference type="CTD" id="23065"/>
<dbReference type="VEuPathDB" id="HostDB:geneid_419470"/>
<dbReference type="eggNOG" id="KOG2103">
    <property type="taxonomic scope" value="Eukaryota"/>
</dbReference>
<dbReference type="InParanoid" id="Q5ZL00"/>
<dbReference type="OrthoDB" id="28092at2759"/>
<dbReference type="PhylomeDB" id="Q5ZL00"/>
<dbReference type="PRO" id="PR:Q5ZL00"/>
<dbReference type="Proteomes" id="UP000000539">
    <property type="component" value="Unassembled WGS sequence"/>
</dbReference>
<dbReference type="GO" id="GO:0072546">
    <property type="term" value="C:EMC complex"/>
    <property type="evidence" value="ECO:0000250"/>
    <property type="project" value="UniProtKB"/>
</dbReference>
<dbReference type="GO" id="GO:0005789">
    <property type="term" value="C:endoplasmic reticulum membrane"/>
    <property type="evidence" value="ECO:0000250"/>
    <property type="project" value="UniProtKB"/>
</dbReference>
<dbReference type="GO" id="GO:0016020">
    <property type="term" value="C:membrane"/>
    <property type="evidence" value="ECO:0000250"/>
    <property type="project" value="UniProtKB"/>
</dbReference>
<dbReference type="GO" id="GO:0045050">
    <property type="term" value="P:protein insertion into ER membrane by stop-transfer membrane-anchor sequence"/>
    <property type="evidence" value="ECO:0000250"/>
    <property type="project" value="UniProtKB"/>
</dbReference>
<dbReference type="GO" id="GO:0071816">
    <property type="term" value="P:tail-anchored membrane protein insertion into ER membrane"/>
    <property type="evidence" value="ECO:0000250"/>
    <property type="project" value="UniProtKB"/>
</dbReference>
<dbReference type="FunFam" id="2.130.10.10:FF:000856">
    <property type="entry name" value="ER membrane protein complex subunit 1"/>
    <property type="match status" value="1"/>
</dbReference>
<dbReference type="Gene3D" id="2.130.10.10">
    <property type="entry name" value="YVTN repeat-like/Quinoprotein amine dehydrogenase"/>
    <property type="match status" value="1"/>
</dbReference>
<dbReference type="InterPro" id="IPR026895">
    <property type="entry name" value="EMC1"/>
</dbReference>
<dbReference type="InterPro" id="IPR011678">
    <property type="entry name" value="EMC1_C"/>
</dbReference>
<dbReference type="InterPro" id="IPR011047">
    <property type="entry name" value="Quinoprotein_ADH-like_sf"/>
</dbReference>
<dbReference type="InterPro" id="IPR015943">
    <property type="entry name" value="WD40/YVTN_repeat-like_dom_sf"/>
</dbReference>
<dbReference type="PANTHER" id="PTHR21573">
    <property type="entry name" value="ER MEMBRANE PROTEIN COMPLEX SUBUNIT 1"/>
    <property type="match status" value="1"/>
</dbReference>
<dbReference type="PANTHER" id="PTHR21573:SF0">
    <property type="entry name" value="ER MEMBRANE PROTEIN COMPLEX SUBUNIT 1"/>
    <property type="match status" value="1"/>
</dbReference>
<dbReference type="Pfam" id="PF25293">
    <property type="entry name" value="Beta-prop_EMC1_N"/>
    <property type="match status" value="1"/>
</dbReference>
<dbReference type="Pfam" id="PF07774">
    <property type="entry name" value="EMC1_C"/>
    <property type="match status" value="1"/>
</dbReference>
<dbReference type="SUPFAM" id="SSF50998">
    <property type="entry name" value="Quinoprotein alcohol dehydrogenase-like"/>
    <property type="match status" value="1"/>
</dbReference>
<sequence>MAAGLWALLLPLAAAVYEDQVGKFDWRQQYVGKLKFASLEAAQGSKKLLVGTEKNVVAALNSRSGEILWRHADKATPEGAIDAMLIHGQDAITVSSAGRILRSWETNIGGLNWETSLDTGSFQTASLVGLQDAVKYVAVLKKAAISLHYLSNGHQKWVEHLPESENTQYQMLYSRGAGVIHVLGVVPQSHLKVLTLSVEDGEVIEQTKVAAPWLKSLNGACGVVGEAVLVCADTATHSLYVCSLETEQEMKQIPLQSLDLEFADGFQPRVLATQPSVINASRTQFFLQLSPGHFSLLQCKQGLLSHLRDFQQAALVSFATTGEKTVAAVLTCRNELKPASSDGLHGNALEDSQKQEALTCSNQTYNINLYLVETGQRLLDTTITFNLEQNGAKPEQLYIQVFLKKDDSVGYRALVQTEDHMLMFLQQPGKVVWSREESLAEVVSLEMVDLPLTGAQAELEGEFGKKADGLLGMFLKRLSSQLILLQAWTAHLWKMFYDARKPRSQIKNEINIDNLARDEFNLQKMMVMVTASGKLFGIESSSGTILWKQYLRNVRPGASLKLMVQRTTAHFPHPPQCTLLVKDKETKMSFLYVFNPIFGKRSQVAPPVLKRPVLQTLLLPIMDQDYAKVLLLIDDEYKVTAFPATKNVLRQLEEMAHSIFFYLVDAEQGKLSGFRLKKDLTTEESWQVAIPTEVQRIVTVKGKRSSEHVHSQGRVMGDRSVLYKSLNPNLLAVVTESTDTHHERTFVGIYLIDGVTGRIIHSSVQKKAKGPVHIVHSENWVVYQYWNTKARRNEFTVLELYEGTEQYNATAFSSLDRPLLPQVLQQSYIFPSAISAMEATITERGITSRHLLIGLPSGAILSLPKALLDPRRPEIPTEQSREENLIPYSPDVQIHAERFINYNQTVSQIRGIYTSPSGLESTCLVVAYGLDIYQTRVYPSKQFDVLKDDYDYVLISSVLFGLVFATMITKRLAQVKLLNRAWR</sequence>
<gene>
    <name type="primary">EMC1</name>
    <name type="ORF">RCJMB04_8i12</name>
</gene>
<keyword id="KW-1015">Disulfide bond</keyword>
<keyword id="KW-0256">Endoplasmic reticulum</keyword>
<keyword id="KW-0325">Glycoprotein</keyword>
<keyword id="KW-0472">Membrane</keyword>
<keyword id="KW-1185">Reference proteome</keyword>
<keyword id="KW-0732">Signal</keyword>
<keyword id="KW-0812">Transmembrane</keyword>
<keyword id="KW-1133">Transmembrane helix</keyword>
<organism>
    <name type="scientific">Gallus gallus</name>
    <name type="common">Chicken</name>
    <dbReference type="NCBI Taxonomy" id="9031"/>
    <lineage>
        <taxon>Eukaryota</taxon>
        <taxon>Metazoa</taxon>
        <taxon>Chordata</taxon>
        <taxon>Craniata</taxon>
        <taxon>Vertebrata</taxon>
        <taxon>Euteleostomi</taxon>
        <taxon>Archelosauria</taxon>
        <taxon>Archosauria</taxon>
        <taxon>Dinosauria</taxon>
        <taxon>Saurischia</taxon>
        <taxon>Theropoda</taxon>
        <taxon>Coelurosauria</taxon>
        <taxon>Aves</taxon>
        <taxon>Neognathae</taxon>
        <taxon>Galloanserae</taxon>
        <taxon>Galliformes</taxon>
        <taxon>Phasianidae</taxon>
        <taxon>Phasianinae</taxon>
        <taxon>Gallus</taxon>
    </lineage>
</organism>
<evidence type="ECO:0000250" key="1">
    <source>
        <dbReference type="UniProtKB" id="Q8N766"/>
    </source>
</evidence>
<evidence type="ECO:0000255" key="2"/>
<evidence type="ECO:0000305" key="3"/>
<reference key="1">
    <citation type="journal article" date="2005" name="Genome Biol.">
        <title>Full-length cDNAs from chicken bursal lymphocytes to facilitate gene function analysis.</title>
        <authorList>
            <person name="Caldwell R.B."/>
            <person name="Kierzek A.M."/>
            <person name="Arakawa H."/>
            <person name="Bezzubov Y."/>
            <person name="Zaim J."/>
            <person name="Fiedler P."/>
            <person name="Kutter S."/>
            <person name="Blagodatski A."/>
            <person name="Kostovska D."/>
            <person name="Koter M."/>
            <person name="Plachy J."/>
            <person name="Carninci P."/>
            <person name="Hayashizaki Y."/>
            <person name="Buerstedde J.-M."/>
        </authorList>
    </citation>
    <scope>NUCLEOTIDE SEQUENCE [LARGE SCALE MRNA]</scope>
    <source>
        <strain>CB</strain>
        <tissue>Bursa of Fabricius</tissue>
    </source>
</reference>
<protein>
    <recommendedName>
        <fullName>ER membrane protein complex subunit 1</fullName>
    </recommendedName>
</protein>
<feature type="signal peptide" evidence="1">
    <location>
        <begin position="1"/>
        <end position="16"/>
    </location>
</feature>
<feature type="chain" id="PRO_0000248600" description="ER membrane protein complex subunit 1">
    <location>
        <begin position="17"/>
        <end position="983"/>
    </location>
</feature>
<feature type="topological domain" description="Lumenal" evidence="1">
    <location>
        <begin position="17"/>
        <end position="952"/>
    </location>
</feature>
<feature type="transmembrane region" description="Helical" evidence="1">
    <location>
        <begin position="953"/>
        <end position="973"/>
    </location>
</feature>
<feature type="topological domain" description="Cytoplasmic" evidence="1">
    <location>
        <begin position="974"/>
        <end position="983"/>
    </location>
</feature>
<feature type="glycosylation site" description="N-linked (GlcNAc...) asparagine" evidence="2">
    <location>
        <position position="279"/>
    </location>
</feature>
<feature type="glycosylation site" description="N-linked (GlcNAc...) asparagine" evidence="2">
    <location>
        <position position="362"/>
    </location>
</feature>
<feature type="glycosylation site" description="N-linked (GlcNAc...) asparagine" evidence="2">
    <location>
        <position position="808"/>
    </location>
</feature>
<feature type="glycosylation site" description="N-linked (GlcNAc...) asparagine" evidence="2">
    <location>
        <position position="903"/>
    </location>
</feature>
<feature type="disulfide bond" evidence="1">
    <location>
        <begin position="221"/>
        <end position="231"/>
    </location>
</feature>
<feature type="disulfide bond" evidence="1">
    <location>
        <begin position="332"/>
        <end position="360"/>
    </location>
</feature>
<accession>Q5ZL00</accession>
<comment type="function">
    <text evidence="1">Part of the endoplasmic reticulum membrane protein complex (EMC) that enables the energy-independent insertion into endoplasmic reticulum membranes of newly synthesized membrane proteins. Preferentially accommodates proteins with transmembrane domains that are weakly hydrophobic or contain destabilizing features such as charged and aromatic residues. Involved in the cotranslational insertion of multi-pass membrane proteins in which stop-transfer membrane-anchor sequences become ER membrane spanning helices. It is also required for the post-translational insertion of tail-anchored/TA proteins in endoplasmic reticulum membranes. By mediating the proper cotranslational insertion of N-terminal transmembrane domains in an N-exo topology, with translocated N-terminus in the lumen of the ER, controls the topology of multi-pass membrane proteins like the G protein-coupled receptors. By regulating the insertion of various proteins in membranes, it is indirectly involved in many cellular processes.</text>
</comment>
<comment type="subunit">
    <text evidence="1">Component of the ER membrane protein complex (EMC).</text>
</comment>
<comment type="subcellular location">
    <subcellularLocation>
        <location evidence="1">Endoplasmic reticulum membrane</location>
        <topology evidence="1">Single-pass type I membrane protein</topology>
    </subcellularLocation>
</comment>
<comment type="similarity">
    <text evidence="3">Belongs to the EMC1 family.</text>
</comment>